<name>RL19_PSEA6</name>
<sequence length="119" mass="13420">MSKVNQDIIKRIEEAQLKSDVPAFGPGDTVVVQVRVKEGEKERLQAYEGVVIAKRNRGLHSAFTVRKISSGEGVERTFQTHSPAISSIAVKRRGDVRRAKLYYLRDRSGRSARIKEKLN</sequence>
<organism>
    <name type="scientific">Pseudoalteromonas atlantica (strain T6c / ATCC BAA-1087)</name>
    <dbReference type="NCBI Taxonomy" id="3042615"/>
    <lineage>
        <taxon>Bacteria</taxon>
        <taxon>Pseudomonadati</taxon>
        <taxon>Pseudomonadota</taxon>
        <taxon>Gammaproteobacteria</taxon>
        <taxon>Alteromonadales</taxon>
        <taxon>Alteromonadaceae</taxon>
        <taxon>Paraglaciecola</taxon>
    </lineage>
</organism>
<evidence type="ECO:0000255" key="1">
    <source>
        <dbReference type="HAMAP-Rule" id="MF_00402"/>
    </source>
</evidence>
<evidence type="ECO:0000305" key="2"/>
<accession>Q15VI6</accession>
<dbReference type="EMBL" id="CP000388">
    <property type="protein sequence ID" value="ABG40102.1"/>
    <property type="status" value="ALT_INIT"/>
    <property type="molecule type" value="Genomic_DNA"/>
</dbReference>
<dbReference type="RefSeq" id="WP_006994624.1">
    <property type="nucleotide sequence ID" value="NC_008228.1"/>
</dbReference>
<dbReference type="SMR" id="Q15VI6"/>
<dbReference type="STRING" id="342610.Patl_1580"/>
<dbReference type="KEGG" id="pat:Patl_1580"/>
<dbReference type="eggNOG" id="COG0335">
    <property type="taxonomic scope" value="Bacteria"/>
</dbReference>
<dbReference type="HOGENOM" id="CLU_103507_1_0_6"/>
<dbReference type="OrthoDB" id="9803541at2"/>
<dbReference type="Proteomes" id="UP000001981">
    <property type="component" value="Chromosome"/>
</dbReference>
<dbReference type="GO" id="GO:0022625">
    <property type="term" value="C:cytosolic large ribosomal subunit"/>
    <property type="evidence" value="ECO:0007669"/>
    <property type="project" value="TreeGrafter"/>
</dbReference>
<dbReference type="GO" id="GO:0003735">
    <property type="term" value="F:structural constituent of ribosome"/>
    <property type="evidence" value="ECO:0007669"/>
    <property type="project" value="InterPro"/>
</dbReference>
<dbReference type="GO" id="GO:0006412">
    <property type="term" value="P:translation"/>
    <property type="evidence" value="ECO:0007669"/>
    <property type="project" value="UniProtKB-UniRule"/>
</dbReference>
<dbReference type="FunFam" id="2.30.30.790:FF:000001">
    <property type="entry name" value="50S ribosomal protein L19"/>
    <property type="match status" value="1"/>
</dbReference>
<dbReference type="Gene3D" id="2.30.30.790">
    <property type="match status" value="1"/>
</dbReference>
<dbReference type="HAMAP" id="MF_00402">
    <property type="entry name" value="Ribosomal_bL19"/>
    <property type="match status" value="1"/>
</dbReference>
<dbReference type="InterPro" id="IPR001857">
    <property type="entry name" value="Ribosomal_bL19"/>
</dbReference>
<dbReference type="InterPro" id="IPR018257">
    <property type="entry name" value="Ribosomal_bL19_CS"/>
</dbReference>
<dbReference type="InterPro" id="IPR038657">
    <property type="entry name" value="Ribosomal_bL19_sf"/>
</dbReference>
<dbReference type="InterPro" id="IPR008991">
    <property type="entry name" value="Translation_prot_SH3-like_sf"/>
</dbReference>
<dbReference type="NCBIfam" id="TIGR01024">
    <property type="entry name" value="rplS_bact"/>
    <property type="match status" value="1"/>
</dbReference>
<dbReference type="PANTHER" id="PTHR15680:SF9">
    <property type="entry name" value="LARGE RIBOSOMAL SUBUNIT PROTEIN BL19M"/>
    <property type="match status" value="1"/>
</dbReference>
<dbReference type="PANTHER" id="PTHR15680">
    <property type="entry name" value="RIBOSOMAL PROTEIN L19"/>
    <property type="match status" value="1"/>
</dbReference>
<dbReference type="Pfam" id="PF01245">
    <property type="entry name" value="Ribosomal_L19"/>
    <property type="match status" value="1"/>
</dbReference>
<dbReference type="PIRSF" id="PIRSF002191">
    <property type="entry name" value="Ribosomal_L19"/>
    <property type="match status" value="1"/>
</dbReference>
<dbReference type="PRINTS" id="PR00061">
    <property type="entry name" value="RIBOSOMALL19"/>
</dbReference>
<dbReference type="SUPFAM" id="SSF50104">
    <property type="entry name" value="Translation proteins SH3-like domain"/>
    <property type="match status" value="1"/>
</dbReference>
<dbReference type="PROSITE" id="PS01015">
    <property type="entry name" value="RIBOSOMAL_L19"/>
    <property type="match status" value="1"/>
</dbReference>
<keyword id="KW-0687">Ribonucleoprotein</keyword>
<keyword id="KW-0689">Ribosomal protein</keyword>
<comment type="function">
    <text evidence="1">This protein is located at the 30S-50S ribosomal subunit interface and may play a role in the structure and function of the aminoacyl-tRNA binding site.</text>
</comment>
<comment type="similarity">
    <text evidence="1">Belongs to the bacterial ribosomal protein bL19 family.</text>
</comment>
<comment type="sequence caution" evidence="2">
    <conflict type="erroneous initiation">
        <sequence resource="EMBL-CDS" id="ABG40102"/>
    </conflict>
</comment>
<feature type="chain" id="PRO_0000340743" description="Large ribosomal subunit protein bL19">
    <location>
        <begin position="1"/>
        <end position="119"/>
    </location>
</feature>
<gene>
    <name evidence="1" type="primary">rplS</name>
    <name type="ordered locus">Patl_1580</name>
</gene>
<proteinExistence type="inferred from homology"/>
<protein>
    <recommendedName>
        <fullName evidence="1">Large ribosomal subunit protein bL19</fullName>
    </recommendedName>
    <alternativeName>
        <fullName evidence="2">50S ribosomal protein L19</fullName>
    </alternativeName>
</protein>
<reference key="1">
    <citation type="submission" date="2006-06" db="EMBL/GenBank/DDBJ databases">
        <title>Complete sequence of Pseudoalteromonas atlantica T6c.</title>
        <authorList>
            <consortium name="US DOE Joint Genome Institute"/>
            <person name="Copeland A."/>
            <person name="Lucas S."/>
            <person name="Lapidus A."/>
            <person name="Barry K."/>
            <person name="Detter J.C."/>
            <person name="Glavina del Rio T."/>
            <person name="Hammon N."/>
            <person name="Israni S."/>
            <person name="Dalin E."/>
            <person name="Tice H."/>
            <person name="Pitluck S."/>
            <person name="Saunders E."/>
            <person name="Brettin T."/>
            <person name="Bruce D."/>
            <person name="Han C."/>
            <person name="Tapia R."/>
            <person name="Gilna P."/>
            <person name="Schmutz J."/>
            <person name="Larimer F."/>
            <person name="Land M."/>
            <person name="Hauser L."/>
            <person name="Kyrpides N."/>
            <person name="Kim E."/>
            <person name="Karls A.C."/>
            <person name="Bartlett D."/>
            <person name="Higgins B.P."/>
            <person name="Richardson P."/>
        </authorList>
    </citation>
    <scope>NUCLEOTIDE SEQUENCE [LARGE SCALE GENOMIC DNA]</scope>
    <source>
        <strain>T6c / ATCC BAA-1087</strain>
    </source>
</reference>